<sequence>MDRHDTMDFTNEPLSKKRRFLGDQGDSDHVAGGPSSSPQFSAPPSSPPRKKLLQDPNSEVQPRVSKDADHNDDDDDDDDDDDEERPRFFTDDGTLTPHATKICAPWLNDMPKPDPRKGYLLKDVDTPIATPRDVAPPVVESPQLAFDKDTFEAFVGEKVASDILHVISKNCGNNIERAVNMYLDGTWKKLHRAPPVRVNSHSPLVVGGQSPKKSSTSQARSRSHAQAQPQPQSNTPTKVLPSMPDARYVGAFGVEGWATRSGTGLLRHGDSVKIERQKIQPPTVARKGQTKPGTPQSIPRVSAAAAKRVDVIVRFNDASGRELGRLAKDTANWVSTLIDQNICRFEGICVYAPERLRTNETVFLQLKCYMLRSAFLGRTLQLADNRAAGFHEKDETTEEKDLRLRQVALVRLFQEINIVPSRGNAAAAKDARKDLLEAADSAEKKAMDKAKAGDHNTNGLASPPEEAEEGQELEQDQLDALYKKAQSFDFSTPEAEPANTFAMTLRPYQKQSLYWMLAKEKNQRTEDRETSMHPLWEEYVWPTKDHDDKDLPVVPDQPCFYVNPYSGDLSLDFPKQEQHCLGGILADEMGLGKTIQMLSLIHSHRSEVAIKAREAGPTSVNNLPRLPTVSGQKTTIDAPCTTLVVAPMSLLAQWQSEAENASKEGTFKTMMYYGAEKNVDLVTMCCEANAANAPDVIITSYGVVLSEFTQLATKNGDRLSSRGLFSLNFFRVILDEAHNIKNRQAKTSRACYEIAAEHRWVLTGTPIVNRLEDLFSLVRFLRVEPWNNFSFWRTFITVPFESKNFVRALDVVQTVLEPLVMRRTKDMKTPDGQFLVPLPPKHIEIVDIELSEPERAVYDYVFNRAKRTLFDNMQAGTVMKAFTSIFAQILRLRQSCCHPVLVRNQEILADEEEANMAADVAAGLADDMDLQTLIERFTATTDDASKTNNNFGAHVLRQIRDEAVNECPICAEEPMIDQAVTGCWHSACKKCLLDYIKHQTDRNEVPRCFQCREHINIRDIFEVIRHDDDLETSSTPGASPEPRISLQRVGANDSSAKIVALISHLRTLRQEHPKMKSLVISQFTSFLSLISSALTRHKISFLRLDGSMSQKARAAVLTEFQSTNKFCVLLLSLKAGGVGLNLTSAKRVYMMDPWWSFAVEAQAIDRVHRMGQEDEVRVYRFIVKQSVEMRMLRVQERKKFIATSLGMMSDEEKKMQRIEDIKELLSSD</sequence>
<gene>
    <name type="primary">mus-41</name>
    <name type="synonym">rad5</name>
    <name type="ORF">NCU09516</name>
</gene>
<name>RAD5_NEUCR</name>
<organism>
    <name type="scientific">Neurospora crassa (strain ATCC 24698 / 74-OR23-1A / CBS 708.71 / DSM 1257 / FGSC 987)</name>
    <dbReference type="NCBI Taxonomy" id="367110"/>
    <lineage>
        <taxon>Eukaryota</taxon>
        <taxon>Fungi</taxon>
        <taxon>Dikarya</taxon>
        <taxon>Ascomycota</taxon>
        <taxon>Pezizomycotina</taxon>
        <taxon>Sordariomycetes</taxon>
        <taxon>Sordariomycetidae</taxon>
        <taxon>Sordariales</taxon>
        <taxon>Sordariaceae</taxon>
        <taxon>Neurospora</taxon>
    </lineage>
</organism>
<evidence type="ECO:0000250" key="1"/>
<evidence type="ECO:0000255" key="2">
    <source>
        <dbReference type="PROSITE-ProRule" id="PRU00175"/>
    </source>
</evidence>
<evidence type="ECO:0000255" key="3">
    <source>
        <dbReference type="PROSITE-ProRule" id="PRU00541"/>
    </source>
</evidence>
<evidence type="ECO:0000255" key="4">
    <source>
        <dbReference type="PROSITE-ProRule" id="PRU00542"/>
    </source>
</evidence>
<evidence type="ECO:0000256" key="5">
    <source>
        <dbReference type="SAM" id="MobiDB-lite"/>
    </source>
</evidence>
<evidence type="ECO:0000305" key="6"/>
<comment type="function">
    <text evidence="1">Probable helicase, member of the UBC2/RAD6 epistasis group. Functions with DNA repair protein uvs-2/rad18 in error-free postreplication DNA repair. Involved in the maintenance of wild-type rates of instability of simple repetitive sequences such as poly(GT) repeats. Seems to be involved in maintaining a balance which acts in favor of error-prone non-homologous joining during DNA double-strand breaks repairs (By similarity).</text>
</comment>
<comment type="subcellular location">
    <subcellularLocation>
        <location evidence="1">Cytoplasm</location>
    </subcellularLocation>
    <subcellularLocation>
        <location evidence="1">Nucleus</location>
    </subcellularLocation>
</comment>
<comment type="similarity">
    <text evidence="6">Belongs to the SNF2/RAD54 helicase family.</text>
</comment>
<feature type="chain" id="PRO_0000056126" description="DNA repair protein rad5">
    <location>
        <begin position="1"/>
        <end position="1228"/>
    </location>
</feature>
<feature type="domain" description="Helicase ATP-binding" evidence="3">
    <location>
        <begin position="574"/>
        <end position="784"/>
    </location>
</feature>
<feature type="domain" description="Helicase C-terminal" evidence="4">
    <location>
        <begin position="1060"/>
        <end position="1216"/>
    </location>
</feature>
<feature type="zinc finger region" description="RING-type" evidence="2">
    <location>
        <begin position="967"/>
        <end position="1012"/>
    </location>
</feature>
<feature type="region of interest" description="Disordered" evidence="5">
    <location>
        <begin position="1"/>
        <end position="96"/>
    </location>
</feature>
<feature type="region of interest" description="Disordered" evidence="5">
    <location>
        <begin position="194"/>
        <end position="242"/>
    </location>
</feature>
<feature type="region of interest" description="Disordered" evidence="5">
    <location>
        <begin position="280"/>
        <end position="302"/>
    </location>
</feature>
<feature type="region of interest" description="Disordered" evidence="5">
    <location>
        <begin position="445"/>
        <end position="474"/>
    </location>
</feature>
<feature type="short sequence motif" description="DEAH box">
    <location>
        <begin position="735"/>
        <end position="738"/>
    </location>
</feature>
<feature type="compositionally biased region" description="Low complexity" evidence="5">
    <location>
        <begin position="34"/>
        <end position="43"/>
    </location>
</feature>
<feature type="compositionally biased region" description="Acidic residues" evidence="5">
    <location>
        <begin position="70"/>
        <end position="83"/>
    </location>
</feature>
<feature type="compositionally biased region" description="Polar residues" evidence="5">
    <location>
        <begin position="211"/>
        <end position="237"/>
    </location>
</feature>
<feature type="compositionally biased region" description="Basic and acidic residues" evidence="5">
    <location>
        <begin position="445"/>
        <end position="454"/>
    </location>
</feature>
<feature type="compositionally biased region" description="Acidic residues" evidence="5">
    <location>
        <begin position="465"/>
        <end position="474"/>
    </location>
</feature>
<feature type="binding site" evidence="3">
    <location>
        <begin position="587"/>
        <end position="594"/>
    </location>
    <ligand>
        <name>ATP</name>
        <dbReference type="ChEBI" id="CHEBI:30616"/>
    </ligand>
</feature>
<proteinExistence type="inferred from homology"/>
<protein>
    <recommendedName>
        <fullName>DNA repair protein rad5</fullName>
        <ecNumber>3.6.4.-</ecNumber>
    </recommendedName>
    <alternativeName>
        <fullName>Mutagen-sensitive protein 41</fullName>
    </alternativeName>
</protein>
<accession>Q7S1P9</accession>
<reference key="1">
    <citation type="journal article" date="2003" name="Nature">
        <title>The genome sequence of the filamentous fungus Neurospora crassa.</title>
        <authorList>
            <person name="Galagan J.E."/>
            <person name="Calvo S.E."/>
            <person name="Borkovich K.A."/>
            <person name="Selker E.U."/>
            <person name="Read N.D."/>
            <person name="Jaffe D.B."/>
            <person name="FitzHugh W."/>
            <person name="Ma L.-J."/>
            <person name="Smirnov S."/>
            <person name="Purcell S."/>
            <person name="Rehman B."/>
            <person name="Elkins T."/>
            <person name="Engels R."/>
            <person name="Wang S."/>
            <person name="Nielsen C.B."/>
            <person name="Butler J."/>
            <person name="Endrizzi M."/>
            <person name="Qui D."/>
            <person name="Ianakiev P."/>
            <person name="Bell-Pedersen D."/>
            <person name="Nelson M.A."/>
            <person name="Werner-Washburne M."/>
            <person name="Selitrennikoff C.P."/>
            <person name="Kinsey J.A."/>
            <person name="Braun E.L."/>
            <person name="Zelter A."/>
            <person name="Schulte U."/>
            <person name="Kothe G.O."/>
            <person name="Jedd G."/>
            <person name="Mewes H.-W."/>
            <person name="Staben C."/>
            <person name="Marcotte E."/>
            <person name="Greenberg D."/>
            <person name="Roy A."/>
            <person name="Foley K."/>
            <person name="Naylor J."/>
            <person name="Stange-Thomann N."/>
            <person name="Barrett R."/>
            <person name="Gnerre S."/>
            <person name="Kamal M."/>
            <person name="Kamvysselis M."/>
            <person name="Mauceli E.W."/>
            <person name="Bielke C."/>
            <person name="Rudd S."/>
            <person name="Frishman D."/>
            <person name="Krystofova S."/>
            <person name="Rasmussen C."/>
            <person name="Metzenberg R.L."/>
            <person name="Perkins D.D."/>
            <person name="Kroken S."/>
            <person name="Cogoni C."/>
            <person name="Macino G."/>
            <person name="Catcheside D.E.A."/>
            <person name="Li W."/>
            <person name="Pratt R.J."/>
            <person name="Osmani S.A."/>
            <person name="DeSouza C.P.C."/>
            <person name="Glass N.L."/>
            <person name="Orbach M.J."/>
            <person name="Berglund J.A."/>
            <person name="Voelker R."/>
            <person name="Yarden O."/>
            <person name="Plamann M."/>
            <person name="Seiler S."/>
            <person name="Dunlap J.C."/>
            <person name="Radford A."/>
            <person name="Aramayo R."/>
            <person name="Natvig D.O."/>
            <person name="Alex L.A."/>
            <person name="Mannhaupt G."/>
            <person name="Ebbole D.J."/>
            <person name="Freitag M."/>
            <person name="Paulsen I."/>
            <person name="Sachs M.S."/>
            <person name="Lander E.S."/>
            <person name="Nusbaum C."/>
            <person name="Birren B.W."/>
        </authorList>
    </citation>
    <scope>NUCLEOTIDE SEQUENCE [LARGE SCALE GENOMIC DNA]</scope>
    <source>
        <strain>ATCC 24698 / 74-OR23-1A / CBS 708.71 / DSM 1257 / FGSC 987</strain>
    </source>
</reference>
<dbReference type="EC" id="3.6.4.-"/>
<dbReference type="EMBL" id="CM002238">
    <property type="protein sequence ID" value="EAA29275.2"/>
    <property type="molecule type" value="Genomic_DNA"/>
</dbReference>
<dbReference type="RefSeq" id="XP_958511.2">
    <property type="nucleotide sequence ID" value="XM_953418.2"/>
</dbReference>
<dbReference type="SMR" id="Q7S1P9"/>
<dbReference type="FunCoup" id="Q7S1P9">
    <property type="interactions" value="977"/>
</dbReference>
<dbReference type="STRING" id="367110.Q7S1P9"/>
<dbReference type="PaxDb" id="5141-EFNCRP00000009196"/>
<dbReference type="EnsemblFungi" id="EAA29275">
    <property type="protein sequence ID" value="EAA29275"/>
    <property type="gene ID" value="NCU09516"/>
</dbReference>
<dbReference type="GeneID" id="3874658"/>
<dbReference type="KEGG" id="ncr:NCU09516"/>
<dbReference type="VEuPathDB" id="FungiDB:NCU09516"/>
<dbReference type="HOGENOM" id="CLU_000315_2_5_1"/>
<dbReference type="InParanoid" id="Q7S1P9"/>
<dbReference type="OrthoDB" id="2801544at2759"/>
<dbReference type="Proteomes" id="UP000001805">
    <property type="component" value="Chromosome 3, Linkage Group III"/>
</dbReference>
<dbReference type="GO" id="GO:0005737">
    <property type="term" value="C:cytoplasm"/>
    <property type="evidence" value="ECO:0007669"/>
    <property type="project" value="UniProtKB-SubCell"/>
</dbReference>
<dbReference type="GO" id="GO:0005634">
    <property type="term" value="C:nucleus"/>
    <property type="evidence" value="ECO:0000318"/>
    <property type="project" value="GO_Central"/>
</dbReference>
<dbReference type="GO" id="GO:0005524">
    <property type="term" value="F:ATP binding"/>
    <property type="evidence" value="ECO:0007669"/>
    <property type="project" value="UniProtKB-KW"/>
</dbReference>
<dbReference type="GO" id="GO:0008094">
    <property type="term" value="F:ATP-dependent activity, acting on DNA"/>
    <property type="evidence" value="ECO:0000318"/>
    <property type="project" value="GO_Central"/>
</dbReference>
<dbReference type="GO" id="GO:0003677">
    <property type="term" value="F:DNA binding"/>
    <property type="evidence" value="ECO:0007669"/>
    <property type="project" value="UniProtKB-KW"/>
</dbReference>
<dbReference type="GO" id="GO:0004386">
    <property type="term" value="F:helicase activity"/>
    <property type="evidence" value="ECO:0007669"/>
    <property type="project" value="UniProtKB-KW"/>
</dbReference>
<dbReference type="GO" id="GO:0016818">
    <property type="term" value="F:hydrolase activity, acting on acid anhydrides, in phosphorus-containing anhydrides"/>
    <property type="evidence" value="ECO:0007669"/>
    <property type="project" value="InterPro"/>
</dbReference>
<dbReference type="GO" id="GO:0008270">
    <property type="term" value="F:zinc ion binding"/>
    <property type="evidence" value="ECO:0007669"/>
    <property type="project" value="UniProtKB-KW"/>
</dbReference>
<dbReference type="GO" id="GO:0006281">
    <property type="term" value="P:DNA repair"/>
    <property type="evidence" value="ECO:0000318"/>
    <property type="project" value="GO_Central"/>
</dbReference>
<dbReference type="CDD" id="cd18008">
    <property type="entry name" value="DEXDc_SHPRH-like"/>
    <property type="match status" value="1"/>
</dbReference>
<dbReference type="CDD" id="cd16572">
    <property type="entry name" value="RING-HC_SpRad8-like"/>
    <property type="match status" value="1"/>
</dbReference>
<dbReference type="CDD" id="cd18793">
    <property type="entry name" value="SF2_C_SNF"/>
    <property type="match status" value="1"/>
</dbReference>
<dbReference type="Gene3D" id="3.40.50.300">
    <property type="entry name" value="P-loop containing nucleotide triphosphate hydrolases"/>
    <property type="match status" value="1"/>
</dbReference>
<dbReference type="Gene3D" id="3.40.50.10810">
    <property type="entry name" value="Tandem AAA-ATPase domain"/>
    <property type="match status" value="1"/>
</dbReference>
<dbReference type="Gene3D" id="3.30.40.10">
    <property type="entry name" value="Zinc/RING finger domain, C3HC4 (zinc finger)"/>
    <property type="match status" value="1"/>
</dbReference>
<dbReference type="InterPro" id="IPR014001">
    <property type="entry name" value="Helicase_ATP-bd"/>
</dbReference>
<dbReference type="InterPro" id="IPR001650">
    <property type="entry name" value="Helicase_C-like"/>
</dbReference>
<dbReference type="InterPro" id="IPR014905">
    <property type="entry name" value="HIRAN"/>
</dbReference>
<dbReference type="InterPro" id="IPR027417">
    <property type="entry name" value="P-loop_NTPase"/>
</dbReference>
<dbReference type="InterPro" id="IPR038718">
    <property type="entry name" value="SNF2-like_sf"/>
</dbReference>
<dbReference type="InterPro" id="IPR049730">
    <property type="entry name" value="SNF2/RAD54-like_C"/>
</dbReference>
<dbReference type="InterPro" id="IPR000330">
    <property type="entry name" value="SNF2_N"/>
</dbReference>
<dbReference type="InterPro" id="IPR050628">
    <property type="entry name" value="SNF2_RAD54_helicase_TF"/>
</dbReference>
<dbReference type="InterPro" id="IPR001841">
    <property type="entry name" value="Znf_RING"/>
</dbReference>
<dbReference type="InterPro" id="IPR013083">
    <property type="entry name" value="Znf_RING/FYVE/PHD"/>
</dbReference>
<dbReference type="PANTHER" id="PTHR45626:SF22">
    <property type="entry name" value="DNA REPAIR PROTEIN RAD5"/>
    <property type="match status" value="1"/>
</dbReference>
<dbReference type="PANTHER" id="PTHR45626">
    <property type="entry name" value="TRANSCRIPTION TERMINATION FACTOR 2-RELATED"/>
    <property type="match status" value="1"/>
</dbReference>
<dbReference type="Pfam" id="PF00271">
    <property type="entry name" value="Helicase_C"/>
    <property type="match status" value="1"/>
</dbReference>
<dbReference type="Pfam" id="PF08797">
    <property type="entry name" value="HIRAN"/>
    <property type="match status" value="1"/>
</dbReference>
<dbReference type="Pfam" id="PF00176">
    <property type="entry name" value="SNF2-rel_dom"/>
    <property type="match status" value="1"/>
</dbReference>
<dbReference type="Pfam" id="PF24975">
    <property type="entry name" value="UBA_Rad5"/>
    <property type="match status" value="1"/>
</dbReference>
<dbReference type="SMART" id="SM00487">
    <property type="entry name" value="DEXDc"/>
    <property type="match status" value="1"/>
</dbReference>
<dbReference type="SMART" id="SM00490">
    <property type="entry name" value="HELICc"/>
    <property type="match status" value="1"/>
</dbReference>
<dbReference type="SMART" id="SM00910">
    <property type="entry name" value="HIRAN"/>
    <property type="match status" value="1"/>
</dbReference>
<dbReference type="SUPFAM" id="SSF52540">
    <property type="entry name" value="P-loop containing nucleoside triphosphate hydrolases"/>
    <property type="match status" value="2"/>
</dbReference>
<dbReference type="SUPFAM" id="SSF57850">
    <property type="entry name" value="RING/U-box"/>
    <property type="match status" value="1"/>
</dbReference>
<dbReference type="PROSITE" id="PS51192">
    <property type="entry name" value="HELICASE_ATP_BIND_1"/>
    <property type="match status" value="1"/>
</dbReference>
<dbReference type="PROSITE" id="PS51194">
    <property type="entry name" value="HELICASE_CTER"/>
    <property type="match status" value="1"/>
</dbReference>
<dbReference type="PROSITE" id="PS50089">
    <property type="entry name" value="ZF_RING_2"/>
    <property type="match status" value="1"/>
</dbReference>
<keyword id="KW-0067">ATP-binding</keyword>
<keyword id="KW-0963">Cytoplasm</keyword>
<keyword id="KW-0227">DNA damage</keyword>
<keyword id="KW-0234">DNA repair</keyword>
<keyword id="KW-0238">DNA-binding</keyword>
<keyword id="KW-0347">Helicase</keyword>
<keyword id="KW-0378">Hydrolase</keyword>
<keyword id="KW-0479">Metal-binding</keyword>
<keyword id="KW-0547">Nucleotide-binding</keyword>
<keyword id="KW-0539">Nucleus</keyword>
<keyword id="KW-1185">Reference proteome</keyword>
<keyword id="KW-0862">Zinc</keyword>
<keyword id="KW-0863">Zinc-finger</keyword>